<protein>
    <recommendedName>
        <fullName evidence="1">Cytochrome b6-f complex subunit 4</fullName>
    </recommendedName>
    <alternativeName>
        <fullName evidence="1">17 kDa polypeptide</fullName>
    </alternativeName>
</protein>
<evidence type="ECO:0000255" key="1">
    <source>
        <dbReference type="HAMAP-Rule" id="MF_01344"/>
    </source>
</evidence>
<keyword id="KW-0249">Electron transport</keyword>
<keyword id="KW-0472">Membrane</keyword>
<keyword id="KW-0602">Photosynthesis</keyword>
<keyword id="KW-1185">Reference proteome</keyword>
<keyword id="KW-0793">Thylakoid</keyword>
<keyword id="KW-0812">Transmembrane</keyword>
<keyword id="KW-1133">Transmembrane helix</keyword>
<keyword id="KW-0813">Transport</keyword>
<reference key="1">
    <citation type="submission" date="2005-08" db="EMBL/GenBank/DDBJ databases">
        <title>Complete sequence of Synechococcus sp. CC9902.</title>
        <authorList>
            <person name="Copeland A."/>
            <person name="Lucas S."/>
            <person name="Lapidus A."/>
            <person name="Barry K."/>
            <person name="Detter J.C."/>
            <person name="Glavina T."/>
            <person name="Hammon N."/>
            <person name="Israni S."/>
            <person name="Pitluck S."/>
            <person name="Martinez M."/>
            <person name="Schmutz J."/>
            <person name="Larimer F."/>
            <person name="Land M."/>
            <person name="Kyrpides N."/>
            <person name="Ivanova N."/>
            <person name="Richardson P."/>
        </authorList>
    </citation>
    <scope>NUCLEOTIDE SEQUENCE [LARGE SCALE GENOMIC DNA]</scope>
    <source>
        <strain>CC9902</strain>
    </source>
</reference>
<comment type="function">
    <text evidence="1">Component of the cytochrome b6-f complex, which mediates electron transfer between photosystem II (PSII) and photosystem I (PSI), cyclic electron flow around PSI, and state transitions.</text>
</comment>
<comment type="subunit">
    <text evidence="1">The 4 large subunits of the cytochrome b6-f complex are cytochrome b6, subunit IV (17 kDa polypeptide, PetD), cytochrome f and the Rieske protein, while the 4 small subunits are PetG, PetL, PetM and PetN. The complex functions as a dimer.</text>
</comment>
<comment type="subcellular location">
    <subcellularLocation>
        <location evidence="1">Cellular thylakoid membrane</location>
        <topology evidence="1">Multi-pass membrane protein</topology>
    </subcellularLocation>
</comment>
<comment type="similarity">
    <text evidence="1">Belongs to the cytochrome b family. PetD subfamily.</text>
</comment>
<dbReference type="EMBL" id="CP000097">
    <property type="protein sequence ID" value="ABB26805.1"/>
    <property type="molecule type" value="Genomic_DNA"/>
</dbReference>
<dbReference type="RefSeq" id="WP_011360609.1">
    <property type="nucleotide sequence ID" value="NC_007513.1"/>
</dbReference>
<dbReference type="SMR" id="Q3AWF1"/>
<dbReference type="STRING" id="316279.Syncc9902_1848"/>
<dbReference type="KEGG" id="sye:Syncc9902_1848"/>
<dbReference type="eggNOG" id="COG1290">
    <property type="taxonomic scope" value="Bacteria"/>
</dbReference>
<dbReference type="HOGENOM" id="CLU_112652_0_0_3"/>
<dbReference type="OrthoDB" id="529454at2"/>
<dbReference type="Proteomes" id="UP000002712">
    <property type="component" value="Chromosome"/>
</dbReference>
<dbReference type="GO" id="GO:0031676">
    <property type="term" value="C:plasma membrane-derived thylakoid membrane"/>
    <property type="evidence" value="ECO:0007669"/>
    <property type="project" value="UniProtKB-SubCell"/>
</dbReference>
<dbReference type="GO" id="GO:0045158">
    <property type="term" value="F:electron transporter, transferring electrons within cytochrome b6/f complex of photosystem II activity"/>
    <property type="evidence" value="ECO:0007669"/>
    <property type="project" value="UniProtKB-UniRule"/>
</dbReference>
<dbReference type="GO" id="GO:0045156">
    <property type="term" value="F:electron transporter, transferring electrons within the cyclic electron transport pathway of photosynthesis activity"/>
    <property type="evidence" value="ECO:0007669"/>
    <property type="project" value="InterPro"/>
</dbReference>
<dbReference type="GO" id="GO:0008121">
    <property type="term" value="F:ubiquinol-cytochrome-c reductase activity"/>
    <property type="evidence" value="ECO:0007669"/>
    <property type="project" value="TreeGrafter"/>
</dbReference>
<dbReference type="GO" id="GO:0009767">
    <property type="term" value="P:photosynthetic electron transport chain"/>
    <property type="evidence" value="ECO:0007669"/>
    <property type="project" value="InterPro"/>
</dbReference>
<dbReference type="CDD" id="cd00290">
    <property type="entry name" value="cytochrome_b_C"/>
    <property type="match status" value="1"/>
</dbReference>
<dbReference type="FunFam" id="1.10.287.980:FF:000001">
    <property type="entry name" value="Cytochrome b6-f complex subunit 4"/>
    <property type="match status" value="1"/>
</dbReference>
<dbReference type="FunFam" id="1.20.5.510:FF:000002">
    <property type="entry name" value="Cytochrome b6-f complex subunit 4"/>
    <property type="match status" value="1"/>
</dbReference>
<dbReference type="Gene3D" id="1.10.287.980">
    <property type="entry name" value="plastocyanin oxidoreductase"/>
    <property type="match status" value="1"/>
</dbReference>
<dbReference type="Gene3D" id="1.20.5.510">
    <property type="entry name" value="Single helix bin"/>
    <property type="match status" value="1"/>
</dbReference>
<dbReference type="HAMAP" id="MF_01344">
    <property type="entry name" value="Cytb6_f_subIV"/>
    <property type="match status" value="1"/>
</dbReference>
<dbReference type="InterPro" id="IPR005798">
    <property type="entry name" value="Cyt_b/b6_C"/>
</dbReference>
<dbReference type="InterPro" id="IPR036150">
    <property type="entry name" value="Cyt_b/b6_C_sf"/>
</dbReference>
<dbReference type="InterPro" id="IPR005870">
    <property type="entry name" value="Cyt_b6/f_cplx_suIV"/>
</dbReference>
<dbReference type="InterPro" id="IPR048260">
    <property type="entry name" value="Cytochrome_b_C_euk/bac"/>
</dbReference>
<dbReference type="NCBIfam" id="TIGR01156">
    <property type="entry name" value="cytb6_f_IV"/>
    <property type="match status" value="1"/>
</dbReference>
<dbReference type="PANTHER" id="PTHR19271">
    <property type="entry name" value="CYTOCHROME B"/>
    <property type="match status" value="1"/>
</dbReference>
<dbReference type="PANTHER" id="PTHR19271:SF41">
    <property type="entry name" value="CYTOCHROME B_B6 C-TERMINAL REGION PROFILE DOMAIN-CONTAINING PROTEIN"/>
    <property type="match status" value="1"/>
</dbReference>
<dbReference type="Pfam" id="PF00032">
    <property type="entry name" value="Cytochrom_B_C"/>
    <property type="match status" value="1"/>
</dbReference>
<dbReference type="PIRSF" id="PIRSF000033">
    <property type="entry name" value="B6f_17K"/>
    <property type="match status" value="1"/>
</dbReference>
<dbReference type="SUPFAM" id="SSF81648">
    <property type="entry name" value="a domain/subunit of cytochrome bc1 complex (Ubiquinol-cytochrome c reductase)"/>
    <property type="match status" value="1"/>
</dbReference>
<dbReference type="PROSITE" id="PS51003">
    <property type="entry name" value="CYTB_CTER"/>
    <property type="match status" value="1"/>
</dbReference>
<sequence>MHILKKPDLSDPKMRAKLAKGMGHNYYGEPAWPNDLLYIFPVVILGTIACVVGLAVLDPAMLADKADPFATPLEILPEWYLYPVFQILRVVPNKLLGIALQTLVPLGLMLVPFIESFNKFQNPFRRPVAMTVFLFGTFTTIYLGIGAAMPIDKSLTLGLF</sequence>
<proteinExistence type="inferred from homology"/>
<gene>
    <name evidence="1" type="primary">petD</name>
    <name type="ordered locus">Syncc9902_1848</name>
</gene>
<feature type="chain" id="PRO_0000255578" description="Cytochrome b6-f complex subunit 4">
    <location>
        <begin position="1"/>
        <end position="160"/>
    </location>
</feature>
<feature type="transmembrane region" description="Helical" evidence="1">
    <location>
        <begin position="36"/>
        <end position="56"/>
    </location>
</feature>
<feature type="transmembrane region" description="Helical" evidence="1">
    <location>
        <begin position="95"/>
        <end position="115"/>
    </location>
</feature>
<feature type="transmembrane region" description="Helical" evidence="1">
    <location>
        <begin position="128"/>
        <end position="148"/>
    </location>
</feature>
<organism>
    <name type="scientific">Synechococcus sp. (strain CC9902)</name>
    <dbReference type="NCBI Taxonomy" id="316279"/>
    <lineage>
        <taxon>Bacteria</taxon>
        <taxon>Bacillati</taxon>
        <taxon>Cyanobacteriota</taxon>
        <taxon>Cyanophyceae</taxon>
        <taxon>Synechococcales</taxon>
        <taxon>Synechococcaceae</taxon>
        <taxon>Synechococcus</taxon>
    </lineage>
</organism>
<accession>Q3AWF1</accession>
<name>PETD_SYNS9</name>